<organism>
    <name type="scientific">Xenopus laevis</name>
    <name type="common">African clawed frog</name>
    <dbReference type="NCBI Taxonomy" id="8355"/>
    <lineage>
        <taxon>Eukaryota</taxon>
        <taxon>Metazoa</taxon>
        <taxon>Chordata</taxon>
        <taxon>Craniata</taxon>
        <taxon>Vertebrata</taxon>
        <taxon>Euteleostomi</taxon>
        <taxon>Amphibia</taxon>
        <taxon>Batrachia</taxon>
        <taxon>Anura</taxon>
        <taxon>Pipoidea</taxon>
        <taxon>Pipidae</taxon>
        <taxon>Xenopodinae</taxon>
        <taxon>Xenopus</taxon>
        <taxon>Xenopus</taxon>
    </lineage>
</organism>
<comment type="function">
    <text evidence="1">May play a role in bone development.</text>
</comment>
<comment type="subcellular location">
    <subcellularLocation>
        <location evidence="4">Membrane</location>
        <topology evidence="2">Multi-pass membrane protein</topology>
    </subcellularLocation>
</comment>
<comment type="similarity">
    <text evidence="4">Belongs to the TMEM263 family.</text>
</comment>
<protein>
    <recommendedName>
        <fullName>Transmembrane protein 263-A</fullName>
    </recommendedName>
</protein>
<evidence type="ECO:0000250" key="1">
    <source>
        <dbReference type="UniProtKB" id="Q8WUH6"/>
    </source>
</evidence>
<evidence type="ECO:0000255" key="2"/>
<evidence type="ECO:0000256" key="3">
    <source>
        <dbReference type="SAM" id="MobiDB-lite"/>
    </source>
</evidence>
<evidence type="ECO:0000305" key="4"/>
<reference key="1">
    <citation type="submission" date="2004-09" db="EMBL/GenBank/DDBJ databases">
        <authorList>
            <consortium name="NIH - Xenopus Gene Collection (XGC) project"/>
        </authorList>
    </citation>
    <scope>NUCLEOTIDE SEQUENCE [LARGE SCALE MRNA]</scope>
    <source>
        <tissue>Eye</tissue>
    </source>
</reference>
<keyword id="KW-0472">Membrane</keyword>
<keyword id="KW-1185">Reference proteome</keyword>
<keyword id="KW-0812">Transmembrane</keyword>
<keyword id="KW-1133">Transmembrane helix</keyword>
<dbReference type="EMBL" id="BC082463">
    <property type="protein sequence ID" value="AAH82463.1"/>
    <property type="molecule type" value="mRNA"/>
</dbReference>
<dbReference type="RefSeq" id="NP_001087911.1">
    <property type="nucleotide sequence ID" value="NM_001094442.1"/>
</dbReference>
<dbReference type="RefSeq" id="XP_018106591.1">
    <property type="nucleotide sequence ID" value="XM_018251102.1"/>
</dbReference>
<dbReference type="DNASU" id="447772"/>
<dbReference type="GeneID" id="447772"/>
<dbReference type="KEGG" id="xla:447772"/>
<dbReference type="AGR" id="Xenbase:XB-GENE-6253386"/>
<dbReference type="CTD" id="447772"/>
<dbReference type="Xenbase" id="XB-GENE-6253386">
    <property type="gene designation" value="tmem263.L"/>
</dbReference>
<dbReference type="OMA" id="ASHTNEP"/>
<dbReference type="OrthoDB" id="6140834at2759"/>
<dbReference type="Proteomes" id="UP000186698">
    <property type="component" value="Chromosome 3L"/>
</dbReference>
<dbReference type="Bgee" id="447772">
    <property type="expression patterns" value="Expressed in internal ear and 19 other cell types or tissues"/>
</dbReference>
<dbReference type="GO" id="GO:0016020">
    <property type="term" value="C:membrane"/>
    <property type="evidence" value="ECO:0007669"/>
    <property type="project" value="UniProtKB-SubCell"/>
</dbReference>
<dbReference type="InterPro" id="IPR028153">
    <property type="entry name" value="UPF0444"/>
</dbReference>
<dbReference type="PANTHER" id="PTHR31443">
    <property type="match status" value="1"/>
</dbReference>
<dbReference type="Pfam" id="PF15475">
    <property type="entry name" value="UPF0444"/>
    <property type="match status" value="1"/>
</dbReference>
<gene>
    <name type="primary">tmem263-a</name>
</gene>
<proteinExistence type="inferred from homology"/>
<name>T263A_XENLA</name>
<accession>Q640X6</accession>
<feature type="chain" id="PRO_0000263632" description="Transmembrane protein 263-A">
    <location>
        <begin position="1"/>
        <end position="114"/>
    </location>
</feature>
<feature type="transmembrane region" description="Helical" evidence="2">
    <location>
        <begin position="40"/>
        <end position="60"/>
    </location>
</feature>
<feature type="transmembrane region" description="Helical" evidence="2">
    <location>
        <begin position="78"/>
        <end position="98"/>
    </location>
</feature>
<feature type="region of interest" description="Disordered" evidence="3">
    <location>
        <begin position="1"/>
        <end position="33"/>
    </location>
</feature>
<sequence length="114" mass="11492">MSQTEKIEEPVPSYLCEEPPEGTVKDHPQQQPGMISRVTGGIFSMTKGAVGATIGGVAWIGGKSFEVTKTAVTSVPSIGVGIVKGSVSAVTGSVAAVGSAVSSKVSGKKKDKSD</sequence>